<keyword id="KW-0963">Cytoplasm</keyword>
<keyword id="KW-0378">Hydrolase</keyword>
<keyword id="KW-0539">Nucleus</keyword>
<keyword id="KW-0904">Protein phosphatase</keyword>
<keyword id="KW-1185">Reference proteome</keyword>
<dbReference type="EC" id="3.1.3.16"/>
<dbReference type="EC" id="3.1.3.48"/>
<dbReference type="EMBL" id="BX548023">
    <property type="protein sequence ID" value="CAK10906.2"/>
    <property type="molecule type" value="Genomic_DNA"/>
</dbReference>
<dbReference type="EMBL" id="BX890541">
    <property type="protein sequence ID" value="CAK10906.2"/>
    <property type="status" value="JOINED"/>
    <property type="molecule type" value="Genomic_DNA"/>
</dbReference>
<dbReference type="EMBL" id="BX890541">
    <property type="protein sequence ID" value="CAN87750.1"/>
    <property type="molecule type" value="Genomic_DNA"/>
</dbReference>
<dbReference type="EMBL" id="BX548023">
    <property type="protein sequence ID" value="CAN87750.1"/>
    <property type="status" value="JOINED"/>
    <property type="molecule type" value="Genomic_DNA"/>
</dbReference>
<dbReference type="EMBL" id="BC076284">
    <property type="protein sequence ID" value="AAH76284.1"/>
    <property type="molecule type" value="mRNA"/>
</dbReference>
<dbReference type="RefSeq" id="NP_001002514.1">
    <property type="nucleotide sequence ID" value="NM_001002514.1"/>
</dbReference>
<dbReference type="SMR" id="Q1LWL2"/>
<dbReference type="FunCoup" id="Q1LWL2">
    <property type="interactions" value="2"/>
</dbReference>
<dbReference type="STRING" id="7955.ENSDARP00000073347"/>
<dbReference type="PaxDb" id="7955-ENSDARP00000073347"/>
<dbReference type="Ensembl" id="ENSDART00000078888">
    <property type="protein sequence ID" value="ENSDARP00000073347"/>
    <property type="gene ID" value="ENSDARG00000056396"/>
</dbReference>
<dbReference type="GeneID" id="436787"/>
<dbReference type="KEGG" id="dre:436787"/>
<dbReference type="AGR" id="ZFIN:ZDB-GENE-040718-219"/>
<dbReference type="CTD" id="436787"/>
<dbReference type="ZFIN" id="ZDB-GENE-040718-219">
    <property type="gene designation" value="dusp22a"/>
</dbReference>
<dbReference type="eggNOG" id="KOG1716">
    <property type="taxonomic scope" value="Eukaryota"/>
</dbReference>
<dbReference type="HOGENOM" id="CLU_027074_5_0_1"/>
<dbReference type="InParanoid" id="Q1LWL2"/>
<dbReference type="OMA" id="RENHWIN"/>
<dbReference type="OrthoDB" id="9979246at2759"/>
<dbReference type="PhylomeDB" id="Q1LWL2"/>
<dbReference type="TreeFam" id="TF105126"/>
<dbReference type="PRO" id="PR:Q1LWL2"/>
<dbReference type="Proteomes" id="UP000000437">
    <property type="component" value="Chromosome 18"/>
</dbReference>
<dbReference type="Bgee" id="ENSDARG00000056396">
    <property type="expression patterns" value="Expressed in muscle tissue and 24 other cell types or tissues"/>
</dbReference>
<dbReference type="GO" id="GO:0005829">
    <property type="term" value="C:cytosol"/>
    <property type="evidence" value="ECO:0000318"/>
    <property type="project" value="GO_Central"/>
</dbReference>
<dbReference type="GO" id="GO:0005634">
    <property type="term" value="C:nucleus"/>
    <property type="evidence" value="ECO:0007669"/>
    <property type="project" value="UniProtKB-SubCell"/>
</dbReference>
<dbReference type="GO" id="GO:0004722">
    <property type="term" value="F:protein serine/threonine phosphatase activity"/>
    <property type="evidence" value="ECO:0007669"/>
    <property type="project" value="UniProtKB-EC"/>
</dbReference>
<dbReference type="GO" id="GO:0004725">
    <property type="term" value="F:protein tyrosine phosphatase activity"/>
    <property type="evidence" value="ECO:0000318"/>
    <property type="project" value="GO_Central"/>
</dbReference>
<dbReference type="GO" id="GO:0007165">
    <property type="term" value="P:signal transduction"/>
    <property type="evidence" value="ECO:0000318"/>
    <property type="project" value="GO_Central"/>
</dbReference>
<dbReference type="FunFam" id="3.90.190.10:FF:000048">
    <property type="entry name" value="dual specificity protein phosphatase 22 isoform X1"/>
    <property type="match status" value="1"/>
</dbReference>
<dbReference type="Gene3D" id="3.90.190.10">
    <property type="entry name" value="Protein tyrosine phosphatase superfamily"/>
    <property type="match status" value="1"/>
</dbReference>
<dbReference type="InterPro" id="IPR000340">
    <property type="entry name" value="Dual-sp_phosphatase_cat-dom"/>
</dbReference>
<dbReference type="InterPro" id="IPR029021">
    <property type="entry name" value="Prot-tyrosine_phosphatase-like"/>
</dbReference>
<dbReference type="InterPro" id="IPR016130">
    <property type="entry name" value="Tyr_Pase_AS"/>
</dbReference>
<dbReference type="InterPro" id="IPR000387">
    <property type="entry name" value="Tyr_Pase_dom"/>
</dbReference>
<dbReference type="InterPro" id="IPR020422">
    <property type="entry name" value="TYR_PHOSPHATASE_DUAL_dom"/>
</dbReference>
<dbReference type="PANTHER" id="PTHR45948">
    <property type="entry name" value="DUAL SPECIFICITY PROTEIN PHOSPHATASE DDB_G0269404-RELATED"/>
    <property type="match status" value="1"/>
</dbReference>
<dbReference type="PANTHER" id="PTHR45948:SF1">
    <property type="entry name" value="TYROSINE-PROTEIN PHOSPHATASE DOMAIN-CONTAINING PROTEIN"/>
    <property type="match status" value="1"/>
</dbReference>
<dbReference type="Pfam" id="PF00782">
    <property type="entry name" value="DSPc"/>
    <property type="match status" value="1"/>
</dbReference>
<dbReference type="SMART" id="SM00195">
    <property type="entry name" value="DSPc"/>
    <property type="match status" value="1"/>
</dbReference>
<dbReference type="SUPFAM" id="SSF52799">
    <property type="entry name" value="(Phosphotyrosine protein) phosphatases II"/>
    <property type="match status" value="1"/>
</dbReference>
<dbReference type="PROSITE" id="PS00383">
    <property type="entry name" value="TYR_PHOSPHATASE_1"/>
    <property type="match status" value="1"/>
</dbReference>
<dbReference type="PROSITE" id="PS50056">
    <property type="entry name" value="TYR_PHOSPHATASE_2"/>
    <property type="match status" value="1"/>
</dbReference>
<dbReference type="PROSITE" id="PS50054">
    <property type="entry name" value="TYR_PHOSPHATASE_DUAL"/>
    <property type="match status" value="1"/>
</dbReference>
<protein>
    <recommendedName>
        <fullName>Dual specificity protein phosphatase 22-A</fullName>
        <ecNumber>3.1.3.16</ecNumber>
        <ecNumber>3.1.3.48</ecNumber>
    </recommendedName>
</protein>
<comment type="function">
    <text evidence="1">Activates the Jnk signaling pathway. Dephosphorylates and deactivates p38 and stress-activated protein kinase/c-Jun N-terminal kinase (SAPK/JNK) (By similarity).</text>
</comment>
<comment type="catalytic activity">
    <reaction evidence="2 5">
        <text>O-phospho-L-tyrosyl-[protein] + H2O = L-tyrosyl-[protein] + phosphate</text>
        <dbReference type="Rhea" id="RHEA:10684"/>
        <dbReference type="Rhea" id="RHEA-COMP:10136"/>
        <dbReference type="Rhea" id="RHEA-COMP:20101"/>
        <dbReference type="ChEBI" id="CHEBI:15377"/>
        <dbReference type="ChEBI" id="CHEBI:43474"/>
        <dbReference type="ChEBI" id="CHEBI:46858"/>
        <dbReference type="ChEBI" id="CHEBI:61978"/>
        <dbReference type="EC" id="3.1.3.48"/>
    </reaction>
</comment>
<comment type="catalytic activity">
    <reaction>
        <text>O-phospho-L-seryl-[protein] + H2O = L-seryl-[protein] + phosphate</text>
        <dbReference type="Rhea" id="RHEA:20629"/>
        <dbReference type="Rhea" id="RHEA-COMP:9863"/>
        <dbReference type="Rhea" id="RHEA-COMP:11604"/>
        <dbReference type="ChEBI" id="CHEBI:15377"/>
        <dbReference type="ChEBI" id="CHEBI:29999"/>
        <dbReference type="ChEBI" id="CHEBI:43474"/>
        <dbReference type="ChEBI" id="CHEBI:83421"/>
        <dbReference type="EC" id="3.1.3.16"/>
    </reaction>
</comment>
<comment type="catalytic activity">
    <reaction>
        <text>O-phospho-L-threonyl-[protein] + H2O = L-threonyl-[protein] + phosphate</text>
        <dbReference type="Rhea" id="RHEA:47004"/>
        <dbReference type="Rhea" id="RHEA-COMP:11060"/>
        <dbReference type="Rhea" id="RHEA-COMP:11605"/>
        <dbReference type="ChEBI" id="CHEBI:15377"/>
        <dbReference type="ChEBI" id="CHEBI:30013"/>
        <dbReference type="ChEBI" id="CHEBI:43474"/>
        <dbReference type="ChEBI" id="CHEBI:61977"/>
        <dbReference type="EC" id="3.1.3.16"/>
    </reaction>
</comment>
<comment type="subcellular location">
    <subcellularLocation>
        <location evidence="2">Cytoplasm</location>
    </subcellularLocation>
    <subcellularLocation>
        <location evidence="2">Nucleus</location>
    </subcellularLocation>
</comment>
<comment type="similarity">
    <text evidence="3">Belongs to the protein-tyrosine phosphatase family. Non-receptor class dual specificity subfamily.</text>
</comment>
<sequence length="208" mass="23386">MGNGMNKVIDGLYLGNIRDSENRDSLSRNGITHILSVCNNAKPVLEDMTYLCINAADASSQNLSQHFKESIRFIHECRLNGGACLVHCLAGVSRSTTVVVAYLMTVTSYGWQECLTAVKAVRSFVGPNYGFQQQLQEFQMKQVSEYQAWLRASYRSSPFKDQEQVEALLSLFAEQQQQGQQNDPEWMSQGSRIYPLSYNQYSASGSNR</sequence>
<accession>Q1LWL2</accession>
<accession>Q6DGQ6</accession>
<evidence type="ECO:0000250" key="1"/>
<evidence type="ECO:0000250" key="2">
    <source>
        <dbReference type="UniProtKB" id="Q99N11"/>
    </source>
</evidence>
<evidence type="ECO:0000255" key="3"/>
<evidence type="ECO:0000255" key="4">
    <source>
        <dbReference type="PROSITE-ProRule" id="PRU00160"/>
    </source>
</evidence>
<evidence type="ECO:0000255" key="5">
    <source>
        <dbReference type="PROSITE-ProRule" id="PRU10044"/>
    </source>
</evidence>
<evidence type="ECO:0000305" key="6"/>
<evidence type="ECO:0000312" key="7">
    <source>
        <dbReference type="EMBL" id="AAH76284.1"/>
    </source>
</evidence>
<evidence type="ECO:0000312" key="8">
    <source>
        <dbReference type="EMBL" id="CAK10906.2"/>
    </source>
</evidence>
<evidence type="ECO:0000312" key="9">
    <source>
        <dbReference type="ZFIN" id="ZDB-GENE-040718-219"/>
    </source>
</evidence>
<gene>
    <name evidence="9" type="primary">dusp22a</name>
    <name evidence="9" type="synonym">dusp22</name>
    <name type="ORF">si:dkey-190g1.1</name>
    <name type="ORF">zgc:92816</name>
</gene>
<proteinExistence type="evidence at transcript level"/>
<reference key="1">
    <citation type="journal article" date="2013" name="Nature">
        <title>The zebrafish reference genome sequence and its relationship to the human genome.</title>
        <authorList>
            <person name="Howe K."/>
            <person name="Clark M.D."/>
            <person name="Torroja C.F."/>
            <person name="Torrance J."/>
            <person name="Berthelot C."/>
            <person name="Muffato M."/>
            <person name="Collins J.E."/>
            <person name="Humphray S."/>
            <person name="McLaren K."/>
            <person name="Matthews L."/>
            <person name="McLaren S."/>
            <person name="Sealy I."/>
            <person name="Caccamo M."/>
            <person name="Churcher C."/>
            <person name="Scott C."/>
            <person name="Barrett J.C."/>
            <person name="Koch R."/>
            <person name="Rauch G.J."/>
            <person name="White S."/>
            <person name="Chow W."/>
            <person name="Kilian B."/>
            <person name="Quintais L.T."/>
            <person name="Guerra-Assuncao J.A."/>
            <person name="Zhou Y."/>
            <person name="Gu Y."/>
            <person name="Yen J."/>
            <person name="Vogel J.H."/>
            <person name="Eyre T."/>
            <person name="Redmond S."/>
            <person name="Banerjee R."/>
            <person name="Chi J."/>
            <person name="Fu B."/>
            <person name="Langley E."/>
            <person name="Maguire S.F."/>
            <person name="Laird G.K."/>
            <person name="Lloyd D."/>
            <person name="Kenyon E."/>
            <person name="Donaldson S."/>
            <person name="Sehra H."/>
            <person name="Almeida-King J."/>
            <person name="Loveland J."/>
            <person name="Trevanion S."/>
            <person name="Jones M."/>
            <person name="Quail M."/>
            <person name="Willey D."/>
            <person name="Hunt A."/>
            <person name="Burton J."/>
            <person name="Sims S."/>
            <person name="McLay K."/>
            <person name="Plumb B."/>
            <person name="Davis J."/>
            <person name="Clee C."/>
            <person name="Oliver K."/>
            <person name="Clark R."/>
            <person name="Riddle C."/>
            <person name="Elliot D."/>
            <person name="Threadgold G."/>
            <person name="Harden G."/>
            <person name="Ware D."/>
            <person name="Begum S."/>
            <person name="Mortimore B."/>
            <person name="Kerry G."/>
            <person name="Heath P."/>
            <person name="Phillimore B."/>
            <person name="Tracey A."/>
            <person name="Corby N."/>
            <person name="Dunn M."/>
            <person name="Johnson C."/>
            <person name="Wood J."/>
            <person name="Clark S."/>
            <person name="Pelan S."/>
            <person name="Griffiths G."/>
            <person name="Smith M."/>
            <person name="Glithero R."/>
            <person name="Howden P."/>
            <person name="Barker N."/>
            <person name="Lloyd C."/>
            <person name="Stevens C."/>
            <person name="Harley J."/>
            <person name="Holt K."/>
            <person name="Panagiotidis G."/>
            <person name="Lovell J."/>
            <person name="Beasley H."/>
            <person name="Henderson C."/>
            <person name="Gordon D."/>
            <person name="Auger K."/>
            <person name="Wright D."/>
            <person name="Collins J."/>
            <person name="Raisen C."/>
            <person name="Dyer L."/>
            <person name="Leung K."/>
            <person name="Robertson L."/>
            <person name="Ambridge K."/>
            <person name="Leongamornlert D."/>
            <person name="McGuire S."/>
            <person name="Gilderthorp R."/>
            <person name="Griffiths C."/>
            <person name="Manthravadi D."/>
            <person name="Nichol S."/>
            <person name="Barker G."/>
            <person name="Whitehead S."/>
            <person name="Kay M."/>
            <person name="Brown J."/>
            <person name="Murnane C."/>
            <person name="Gray E."/>
            <person name="Humphries M."/>
            <person name="Sycamore N."/>
            <person name="Barker D."/>
            <person name="Saunders D."/>
            <person name="Wallis J."/>
            <person name="Babbage A."/>
            <person name="Hammond S."/>
            <person name="Mashreghi-Mohammadi M."/>
            <person name="Barr L."/>
            <person name="Martin S."/>
            <person name="Wray P."/>
            <person name="Ellington A."/>
            <person name="Matthews N."/>
            <person name="Ellwood M."/>
            <person name="Woodmansey R."/>
            <person name="Clark G."/>
            <person name="Cooper J."/>
            <person name="Tromans A."/>
            <person name="Grafham D."/>
            <person name="Skuce C."/>
            <person name="Pandian R."/>
            <person name="Andrews R."/>
            <person name="Harrison E."/>
            <person name="Kimberley A."/>
            <person name="Garnett J."/>
            <person name="Fosker N."/>
            <person name="Hall R."/>
            <person name="Garner P."/>
            <person name="Kelly D."/>
            <person name="Bird C."/>
            <person name="Palmer S."/>
            <person name="Gehring I."/>
            <person name="Berger A."/>
            <person name="Dooley C.M."/>
            <person name="Ersan-Urun Z."/>
            <person name="Eser C."/>
            <person name="Geiger H."/>
            <person name="Geisler M."/>
            <person name="Karotki L."/>
            <person name="Kirn A."/>
            <person name="Konantz J."/>
            <person name="Konantz M."/>
            <person name="Oberlander M."/>
            <person name="Rudolph-Geiger S."/>
            <person name="Teucke M."/>
            <person name="Lanz C."/>
            <person name="Raddatz G."/>
            <person name="Osoegawa K."/>
            <person name="Zhu B."/>
            <person name="Rapp A."/>
            <person name="Widaa S."/>
            <person name="Langford C."/>
            <person name="Yang F."/>
            <person name="Schuster S.C."/>
            <person name="Carter N.P."/>
            <person name="Harrow J."/>
            <person name="Ning Z."/>
            <person name="Herrero J."/>
            <person name="Searle S.M."/>
            <person name="Enright A."/>
            <person name="Geisler R."/>
            <person name="Plasterk R.H."/>
            <person name="Lee C."/>
            <person name="Westerfield M."/>
            <person name="de Jong P.J."/>
            <person name="Zon L.I."/>
            <person name="Postlethwait J.H."/>
            <person name="Nusslein-Volhard C."/>
            <person name="Hubbard T.J."/>
            <person name="Roest Crollius H."/>
            <person name="Rogers J."/>
            <person name="Stemple D.L."/>
        </authorList>
    </citation>
    <scope>NUCLEOTIDE SEQUENCE [LARGE SCALE GENOMIC DNA]</scope>
    <source>
        <strain>Tuebingen</strain>
    </source>
</reference>
<reference evidence="8" key="2">
    <citation type="submission" date="2004-07" db="EMBL/GenBank/DDBJ databases">
        <authorList>
            <consortium name="NIH - Zebrafish Gene Collection (ZGC) project"/>
        </authorList>
    </citation>
    <scope>NUCLEOTIDE SEQUENCE [LARGE SCALE MRNA]</scope>
    <source>
        <tissue evidence="7">Brain</tissue>
    </source>
</reference>
<organism>
    <name type="scientific">Danio rerio</name>
    <name type="common">Zebrafish</name>
    <name type="synonym">Brachydanio rerio</name>
    <dbReference type="NCBI Taxonomy" id="7955"/>
    <lineage>
        <taxon>Eukaryota</taxon>
        <taxon>Metazoa</taxon>
        <taxon>Chordata</taxon>
        <taxon>Craniata</taxon>
        <taxon>Vertebrata</taxon>
        <taxon>Euteleostomi</taxon>
        <taxon>Actinopterygii</taxon>
        <taxon>Neopterygii</taxon>
        <taxon>Teleostei</taxon>
        <taxon>Ostariophysi</taxon>
        <taxon>Cypriniformes</taxon>
        <taxon>Danionidae</taxon>
        <taxon>Danioninae</taxon>
        <taxon>Danio</taxon>
    </lineage>
</organism>
<name>DS22A_DANRE</name>
<feature type="chain" id="PRO_0000322580" description="Dual specificity protein phosphatase 22-A">
    <location>
        <begin position="1"/>
        <end position="208"/>
    </location>
</feature>
<feature type="domain" description="Tyrosine-protein phosphatase" evidence="4">
    <location>
        <begin position="4"/>
        <end position="144"/>
    </location>
</feature>
<feature type="active site" description="Phosphocysteine intermediate" evidence="4">
    <location>
        <position position="88"/>
    </location>
</feature>
<feature type="sequence conflict" description="In Ref. 2; AAH76284." evidence="6" ref="2">
    <original>S</original>
    <variation>P</variation>
    <location>
        <position position="20"/>
    </location>
</feature>